<keyword id="KW-0963">Cytoplasm</keyword>
<keyword id="KW-0378">Hydrolase</keyword>
<keyword id="KW-0479">Metal-binding</keyword>
<keyword id="KW-0547">Nucleotide-binding</keyword>
<comment type="function">
    <text evidence="1">Catalyzes the strictly specific dephosphorylation of 2'-deoxyribonucleoside 5'-monophosphates.</text>
</comment>
<comment type="catalytic activity">
    <reaction evidence="1">
        <text>a 2'-deoxyribonucleoside 5'-phosphate + H2O = a 2'-deoxyribonucleoside + phosphate</text>
        <dbReference type="Rhea" id="RHEA:36167"/>
        <dbReference type="ChEBI" id="CHEBI:15377"/>
        <dbReference type="ChEBI" id="CHEBI:18274"/>
        <dbReference type="ChEBI" id="CHEBI:43474"/>
        <dbReference type="ChEBI" id="CHEBI:65317"/>
        <dbReference type="EC" id="3.1.3.89"/>
    </reaction>
</comment>
<comment type="cofactor">
    <cofactor evidence="1">
        <name>a divalent metal cation</name>
        <dbReference type="ChEBI" id="CHEBI:60240"/>
    </cofactor>
</comment>
<comment type="subunit">
    <text evidence="1">Homodimer.</text>
</comment>
<comment type="subcellular location">
    <subcellularLocation>
        <location evidence="1">Cytoplasm</location>
    </subcellularLocation>
</comment>
<comment type="similarity">
    <text evidence="1">Belongs to the 5DNU family.</text>
</comment>
<protein>
    <recommendedName>
        <fullName evidence="1">5'-deoxynucleotidase YfbR</fullName>
        <ecNumber evidence="1">3.1.3.89</ecNumber>
    </recommendedName>
    <alternativeName>
        <fullName evidence="1">5'-deoxyribonucleotidase</fullName>
    </alternativeName>
    <alternativeName>
        <fullName evidence="1">Nucleoside 5'-monophosphate phosphohydrolase</fullName>
    </alternativeName>
</protein>
<reference key="1">
    <citation type="submission" date="2008-02" db="EMBL/GenBank/DDBJ databases">
        <title>Complete sequence of Escherichia coli C str. ATCC 8739.</title>
        <authorList>
            <person name="Copeland A."/>
            <person name="Lucas S."/>
            <person name="Lapidus A."/>
            <person name="Glavina del Rio T."/>
            <person name="Dalin E."/>
            <person name="Tice H."/>
            <person name="Bruce D."/>
            <person name="Goodwin L."/>
            <person name="Pitluck S."/>
            <person name="Kiss H."/>
            <person name="Brettin T."/>
            <person name="Detter J.C."/>
            <person name="Han C."/>
            <person name="Kuske C.R."/>
            <person name="Schmutz J."/>
            <person name="Larimer F."/>
            <person name="Land M."/>
            <person name="Hauser L."/>
            <person name="Kyrpides N."/>
            <person name="Mikhailova N."/>
            <person name="Ingram L."/>
            <person name="Richardson P."/>
        </authorList>
    </citation>
    <scope>NUCLEOTIDE SEQUENCE [LARGE SCALE GENOMIC DNA]</scope>
    <source>
        <strain>ATCC 8739 / DSM 1576 / NBRC 3972 / NCIMB 8545 / WDCM 00012 / Crooks</strain>
    </source>
</reference>
<organism>
    <name type="scientific">Escherichia coli (strain ATCC 8739 / DSM 1576 / NBRC 3972 / NCIMB 8545 / WDCM 00012 / Crooks)</name>
    <dbReference type="NCBI Taxonomy" id="481805"/>
    <lineage>
        <taxon>Bacteria</taxon>
        <taxon>Pseudomonadati</taxon>
        <taxon>Pseudomonadota</taxon>
        <taxon>Gammaproteobacteria</taxon>
        <taxon>Enterobacterales</taxon>
        <taxon>Enterobacteriaceae</taxon>
        <taxon>Escherichia</taxon>
    </lineage>
</organism>
<proteinExistence type="inferred from homology"/>
<sequence length="199" mass="22694">MKQSHFFAHLSRLKLINRWPLMRNVRTENVSEHSLQVAMVAHALAAIKNRKFGGNVNAERIALLAMYHDASEVLTGDLPTPVKYFNSQIAQEYKAIEKIAQQKLVDMVPEELRDIFAPLIDEHAYSDEEKSLVKQADALCAYLKCLEELAAGNNEFLLAKTRLEATLEARRSQEMDYFMEVFVPSFHLSLDEISQDSPL</sequence>
<name>5DNU_ECOLC</name>
<gene>
    <name evidence="1" type="primary">yfbR</name>
    <name type="ordered locus">EcolC_1361</name>
</gene>
<dbReference type="EC" id="3.1.3.89" evidence="1"/>
<dbReference type="EMBL" id="CP000946">
    <property type="protein sequence ID" value="ACA77027.1"/>
    <property type="molecule type" value="Genomic_DNA"/>
</dbReference>
<dbReference type="RefSeq" id="WP_000813860.1">
    <property type="nucleotide sequence ID" value="NZ_MTFT01000028.1"/>
</dbReference>
<dbReference type="SMR" id="B1IXQ1"/>
<dbReference type="GeneID" id="93774883"/>
<dbReference type="KEGG" id="ecl:EcolC_1361"/>
<dbReference type="HOGENOM" id="CLU_084784_0_0_6"/>
<dbReference type="GO" id="GO:0005737">
    <property type="term" value="C:cytoplasm"/>
    <property type="evidence" value="ECO:0007669"/>
    <property type="project" value="UniProtKB-SubCell"/>
</dbReference>
<dbReference type="GO" id="GO:0002953">
    <property type="term" value="F:5'-deoxynucleotidase activity"/>
    <property type="evidence" value="ECO:0007669"/>
    <property type="project" value="UniProtKB-EC"/>
</dbReference>
<dbReference type="GO" id="GO:0046872">
    <property type="term" value="F:metal ion binding"/>
    <property type="evidence" value="ECO:0007669"/>
    <property type="project" value="UniProtKB-KW"/>
</dbReference>
<dbReference type="GO" id="GO:0000166">
    <property type="term" value="F:nucleotide binding"/>
    <property type="evidence" value="ECO:0007669"/>
    <property type="project" value="UniProtKB-KW"/>
</dbReference>
<dbReference type="CDD" id="cd00077">
    <property type="entry name" value="HDc"/>
    <property type="match status" value="1"/>
</dbReference>
<dbReference type="FunFam" id="1.10.3210.10:FF:000002">
    <property type="entry name" value="Nucleotidase YfbR"/>
    <property type="match status" value="1"/>
</dbReference>
<dbReference type="Gene3D" id="1.10.3210.10">
    <property type="entry name" value="Hypothetical protein af1432"/>
    <property type="match status" value="1"/>
</dbReference>
<dbReference type="HAMAP" id="MF_01100">
    <property type="entry name" value="5DNU"/>
    <property type="match status" value="1"/>
</dbReference>
<dbReference type="InterPro" id="IPR003607">
    <property type="entry name" value="HD/PDEase_dom"/>
</dbReference>
<dbReference type="InterPro" id="IPR006674">
    <property type="entry name" value="HD_domain"/>
</dbReference>
<dbReference type="InterPro" id="IPR022971">
    <property type="entry name" value="YfbR"/>
</dbReference>
<dbReference type="InterPro" id="IPR039356">
    <property type="entry name" value="YfbR/HDDC2"/>
</dbReference>
<dbReference type="NCBIfam" id="NF003009">
    <property type="entry name" value="PRK03826.1"/>
    <property type="match status" value="1"/>
</dbReference>
<dbReference type="PANTHER" id="PTHR11845">
    <property type="entry name" value="5'-DEOXYNUCLEOTIDASE HDDC2"/>
    <property type="match status" value="1"/>
</dbReference>
<dbReference type="PANTHER" id="PTHR11845:SF13">
    <property type="entry name" value="5'-DEOXYNUCLEOTIDASE HDDC2"/>
    <property type="match status" value="1"/>
</dbReference>
<dbReference type="Pfam" id="PF12917">
    <property type="entry name" value="YfbR-like"/>
    <property type="match status" value="1"/>
</dbReference>
<dbReference type="SMART" id="SM00471">
    <property type="entry name" value="HDc"/>
    <property type="match status" value="1"/>
</dbReference>
<dbReference type="SUPFAM" id="SSF109604">
    <property type="entry name" value="HD-domain/PDEase-like"/>
    <property type="match status" value="1"/>
</dbReference>
<dbReference type="PROSITE" id="PS51831">
    <property type="entry name" value="HD"/>
    <property type="match status" value="1"/>
</dbReference>
<feature type="chain" id="PRO_1000084788" description="5'-deoxynucleotidase YfbR">
    <location>
        <begin position="1"/>
        <end position="199"/>
    </location>
</feature>
<feature type="domain" description="HD" evidence="2">
    <location>
        <begin position="30"/>
        <end position="142"/>
    </location>
</feature>
<feature type="binding site" evidence="1">
    <location>
        <begin position="18"/>
        <end position="19"/>
    </location>
    <ligand>
        <name>substrate</name>
    </ligand>
</feature>
<feature type="binding site" evidence="1">
    <location>
        <position position="33"/>
    </location>
    <ligand>
        <name>a divalent metal cation</name>
        <dbReference type="ChEBI" id="CHEBI:60240"/>
    </ligand>
</feature>
<feature type="binding site" evidence="1">
    <location>
        <position position="33"/>
    </location>
    <ligand>
        <name>substrate</name>
    </ligand>
</feature>
<feature type="binding site" evidence="1">
    <location>
        <position position="68"/>
    </location>
    <ligand>
        <name>a divalent metal cation</name>
        <dbReference type="ChEBI" id="CHEBI:60240"/>
    </ligand>
</feature>
<feature type="binding site" evidence="1">
    <location>
        <position position="69"/>
    </location>
    <ligand>
        <name>a divalent metal cation</name>
        <dbReference type="ChEBI" id="CHEBI:60240"/>
    </ligand>
</feature>
<feature type="binding site" evidence="1">
    <location>
        <position position="69"/>
    </location>
    <ligand>
        <name>substrate</name>
    </ligand>
</feature>
<feature type="binding site" evidence="1">
    <location>
        <begin position="77"/>
        <end position="80"/>
    </location>
    <ligand>
        <name>substrate</name>
    </ligand>
</feature>
<feature type="binding site" evidence="1">
    <location>
        <position position="137"/>
    </location>
    <ligand>
        <name>a divalent metal cation</name>
        <dbReference type="ChEBI" id="CHEBI:60240"/>
    </ligand>
</feature>
<feature type="binding site" evidence="1">
    <location>
        <position position="137"/>
    </location>
    <ligand>
        <name>substrate</name>
    </ligand>
</feature>
<feature type="site" description="Appears to be important in orienting the phosphate for catalysis" evidence="1">
    <location>
        <position position="18"/>
    </location>
</feature>
<accession>B1IXQ1</accession>
<evidence type="ECO:0000255" key="1">
    <source>
        <dbReference type="HAMAP-Rule" id="MF_01100"/>
    </source>
</evidence>
<evidence type="ECO:0000255" key="2">
    <source>
        <dbReference type="PROSITE-ProRule" id="PRU01175"/>
    </source>
</evidence>